<accession>A1WAJ7</accession>
<dbReference type="EC" id="2.8.4.4" evidence="1"/>
<dbReference type="EMBL" id="CP000539">
    <property type="protein sequence ID" value="ABM43272.1"/>
    <property type="molecule type" value="Genomic_DNA"/>
</dbReference>
<dbReference type="SMR" id="A1WAJ7"/>
<dbReference type="STRING" id="232721.Ajs_3147"/>
<dbReference type="KEGG" id="ajs:Ajs_3147"/>
<dbReference type="eggNOG" id="COG0621">
    <property type="taxonomic scope" value="Bacteria"/>
</dbReference>
<dbReference type="HOGENOM" id="CLU_018697_0_0_4"/>
<dbReference type="Proteomes" id="UP000000645">
    <property type="component" value="Chromosome"/>
</dbReference>
<dbReference type="GO" id="GO:0005829">
    <property type="term" value="C:cytosol"/>
    <property type="evidence" value="ECO:0007669"/>
    <property type="project" value="TreeGrafter"/>
</dbReference>
<dbReference type="GO" id="GO:0051539">
    <property type="term" value="F:4 iron, 4 sulfur cluster binding"/>
    <property type="evidence" value="ECO:0007669"/>
    <property type="project" value="UniProtKB-UniRule"/>
</dbReference>
<dbReference type="GO" id="GO:0035599">
    <property type="term" value="F:aspartic acid methylthiotransferase activity"/>
    <property type="evidence" value="ECO:0007669"/>
    <property type="project" value="TreeGrafter"/>
</dbReference>
<dbReference type="GO" id="GO:0046872">
    <property type="term" value="F:metal ion binding"/>
    <property type="evidence" value="ECO:0007669"/>
    <property type="project" value="UniProtKB-KW"/>
</dbReference>
<dbReference type="GO" id="GO:0103039">
    <property type="term" value="F:protein methylthiotransferase activity"/>
    <property type="evidence" value="ECO:0007669"/>
    <property type="project" value="UniProtKB-EC"/>
</dbReference>
<dbReference type="GO" id="GO:0006400">
    <property type="term" value="P:tRNA modification"/>
    <property type="evidence" value="ECO:0007669"/>
    <property type="project" value="InterPro"/>
</dbReference>
<dbReference type="CDD" id="cd01335">
    <property type="entry name" value="Radical_SAM"/>
    <property type="match status" value="1"/>
</dbReference>
<dbReference type="FunFam" id="3.40.50.12160:FF:000002">
    <property type="entry name" value="Ribosomal protein S12 methylthiotransferase RimO"/>
    <property type="match status" value="1"/>
</dbReference>
<dbReference type="FunFam" id="3.80.30.20:FF:000001">
    <property type="entry name" value="tRNA-2-methylthio-N(6)-dimethylallyladenosine synthase 2"/>
    <property type="match status" value="1"/>
</dbReference>
<dbReference type="Gene3D" id="3.40.50.12160">
    <property type="entry name" value="Methylthiotransferase, N-terminal domain"/>
    <property type="match status" value="1"/>
</dbReference>
<dbReference type="Gene3D" id="2.40.50.140">
    <property type="entry name" value="Nucleic acid-binding proteins"/>
    <property type="match status" value="1"/>
</dbReference>
<dbReference type="Gene3D" id="3.80.30.20">
    <property type="entry name" value="tm_1862 like domain"/>
    <property type="match status" value="1"/>
</dbReference>
<dbReference type="HAMAP" id="MF_01865">
    <property type="entry name" value="MTTase_RimO"/>
    <property type="match status" value="1"/>
</dbReference>
<dbReference type="InterPro" id="IPR006638">
    <property type="entry name" value="Elp3/MiaA/NifB-like_rSAM"/>
</dbReference>
<dbReference type="InterPro" id="IPR005839">
    <property type="entry name" value="Methylthiotransferase"/>
</dbReference>
<dbReference type="InterPro" id="IPR020612">
    <property type="entry name" value="Methylthiotransferase_CS"/>
</dbReference>
<dbReference type="InterPro" id="IPR013848">
    <property type="entry name" value="Methylthiotransferase_N"/>
</dbReference>
<dbReference type="InterPro" id="IPR038135">
    <property type="entry name" value="Methylthiotransferase_N_sf"/>
</dbReference>
<dbReference type="InterPro" id="IPR012340">
    <property type="entry name" value="NA-bd_OB-fold"/>
</dbReference>
<dbReference type="InterPro" id="IPR005840">
    <property type="entry name" value="Ribosomal_uS12_MeSTrfase_RimO"/>
</dbReference>
<dbReference type="InterPro" id="IPR007197">
    <property type="entry name" value="rSAM"/>
</dbReference>
<dbReference type="InterPro" id="IPR023404">
    <property type="entry name" value="rSAM_horseshoe"/>
</dbReference>
<dbReference type="InterPro" id="IPR002792">
    <property type="entry name" value="TRAM_dom"/>
</dbReference>
<dbReference type="NCBIfam" id="TIGR01125">
    <property type="entry name" value="30S ribosomal protein S12 methylthiotransferase RimO"/>
    <property type="match status" value="1"/>
</dbReference>
<dbReference type="NCBIfam" id="TIGR00089">
    <property type="entry name" value="MiaB/RimO family radical SAM methylthiotransferase"/>
    <property type="match status" value="1"/>
</dbReference>
<dbReference type="PANTHER" id="PTHR43837">
    <property type="entry name" value="RIBOSOMAL PROTEIN S12 METHYLTHIOTRANSFERASE RIMO"/>
    <property type="match status" value="1"/>
</dbReference>
<dbReference type="PANTHER" id="PTHR43837:SF1">
    <property type="entry name" value="RIBOSOMAL PROTEIN US12 METHYLTHIOTRANSFERASE RIMO"/>
    <property type="match status" value="1"/>
</dbReference>
<dbReference type="Pfam" id="PF04055">
    <property type="entry name" value="Radical_SAM"/>
    <property type="match status" value="1"/>
</dbReference>
<dbReference type="Pfam" id="PF18693">
    <property type="entry name" value="TRAM_2"/>
    <property type="match status" value="1"/>
</dbReference>
<dbReference type="Pfam" id="PF00919">
    <property type="entry name" value="UPF0004"/>
    <property type="match status" value="1"/>
</dbReference>
<dbReference type="SFLD" id="SFLDG01082">
    <property type="entry name" value="B12-binding_domain_containing"/>
    <property type="match status" value="1"/>
</dbReference>
<dbReference type="SFLD" id="SFLDS00029">
    <property type="entry name" value="Radical_SAM"/>
    <property type="match status" value="1"/>
</dbReference>
<dbReference type="SFLD" id="SFLDF00274">
    <property type="entry name" value="ribosomal_protein_S12_methylth"/>
    <property type="match status" value="1"/>
</dbReference>
<dbReference type="SMART" id="SM00729">
    <property type="entry name" value="Elp3"/>
    <property type="match status" value="1"/>
</dbReference>
<dbReference type="SUPFAM" id="SSF102114">
    <property type="entry name" value="Radical SAM enzymes"/>
    <property type="match status" value="1"/>
</dbReference>
<dbReference type="PROSITE" id="PS51449">
    <property type="entry name" value="MTTASE_N"/>
    <property type="match status" value="1"/>
</dbReference>
<dbReference type="PROSITE" id="PS01278">
    <property type="entry name" value="MTTASE_RADICAL"/>
    <property type="match status" value="1"/>
</dbReference>
<dbReference type="PROSITE" id="PS51918">
    <property type="entry name" value="RADICAL_SAM"/>
    <property type="match status" value="1"/>
</dbReference>
<dbReference type="PROSITE" id="PS50926">
    <property type="entry name" value="TRAM"/>
    <property type="match status" value="1"/>
</dbReference>
<protein>
    <recommendedName>
        <fullName evidence="1">Ribosomal protein uS12 methylthiotransferase RimO</fullName>
        <shortName evidence="1">uS12 MTTase</shortName>
        <shortName evidence="1">uS12 methylthiotransferase</shortName>
        <ecNumber evidence="1">2.8.4.4</ecNumber>
    </recommendedName>
    <alternativeName>
        <fullName evidence="1">Ribosomal protein uS12 (aspartate-C(3))-methylthiotransferase</fullName>
    </alternativeName>
    <alternativeName>
        <fullName evidence="1">Ribosome maturation factor RimO</fullName>
    </alternativeName>
</protein>
<sequence>MSQALSPAKTPKIGFVSLGCPKNLTDSELLLTQLSAEGYETSKTFEGADLVIVNTCGFIDEAVKESLDTIGEALAENGKVIVTGCLGARAGETGGNLVKEVHPSVLAVTGPHAAQEVMEVVHTHCPKPHDPFLDLVPGGFGEAGIKLTPRHYAYLKISEGCNHRCTFCIIPSMRGDLVSRPVGDVLKEAKALFEGGVKELLVISQDTSAYGVDVKYRTGFWDGKPVKTRTLELVQKLGEMAATYGAWVRLHYVYPYPSVDDIIPLMAQGLVLPYLDVPFQHSHPDVLKRMKRPASGEKNLERILRWREACPEIVIRSTFIAGFPGETEEEFQHLLDFVREAQIDRAGCFAYSDVEGAAANELPGMLPMELREERRARFMAVAEEVSTAKLQRRVGQTMQVLVDQAVGLGKKGGVGRSYADAPEIDGVVHLLPPEKFSKTYKVGDFVKARIVGTQGHDLVGVPV</sequence>
<evidence type="ECO:0000255" key="1">
    <source>
        <dbReference type="HAMAP-Rule" id="MF_01865"/>
    </source>
</evidence>
<evidence type="ECO:0000255" key="2">
    <source>
        <dbReference type="PROSITE-ProRule" id="PRU01266"/>
    </source>
</evidence>
<reference key="1">
    <citation type="submission" date="2006-12" db="EMBL/GenBank/DDBJ databases">
        <title>Complete sequence of chromosome 1 of Acidovorax sp. JS42.</title>
        <authorList>
            <person name="Copeland A."/>
            <person name="Lucas S."/>
            <person name="Lapidus A."/>
            <person name="Barry K."/>
            <person name="Detter J.C."/>
            <person name="Glavina del Rio T."/>
            <person name="Dalin E."/>
            <person name="Tice H."/>
            <person name="Pitluck S."/>
            <person name="Chertkov O."/>
            <person name="Brettin T."/>
            <person name="Bruce D."/>
            <person name="Han C."/>
            <person name="Tapia R."/>
            <person name="Gilna P."/>
            <person name="Schmutz J."/>
            <person name="Larimer F."/>
            <person name="Land M."/>
            <person name="Hauser L."/>
            <person name="Kyrpides N."/>
            <person name="Kim E."/>
            <person name="Stahl D."/>
            <person name="Richardson P."/>
        </authorList>
    </citation>
    <scope>NUCLEOTIDE SEQUENCE [LARGE SCALE GENOMIC DNA]</scope>
    <source>
        <strain>JS42</strain>
    </source>
</reference>
<gene>
    <name evidence="1" type="primary">rimO</name>
    <name type="ordered locus">Ajs_3147</name>
</gene>
<keyword id="KW-0004">4Fe-4S</keyword>
<keyword id="KW-0963">Cytoplasm</keyword>
<keyword id="KW-0408">Iron</keyword>
<keyword id="KW-0411">Iron-sulfur</keyword>
<keyword id="KW-0479">Metal-binding</keyword>
<keyword id="KW-0949">S-adenosyl-L-methionine</keyword>
<keyword id="KW-0808">Transferase</keyword>
<feature type="chain" id="PRO_0000374677" description="Ribosomal protein uS12 methylthiotransferase RimO">
    <location>
        <begin position="1"/>
        <end position="463"/>
    </location>
</feature>
<feature type="domain" description="MTTase N-terminal" evidence="1">
    <location>
        <begin position="11"/>
        <end position="126"/>
    </location>
</feature>
<feature type="domain" description="Radical SAM core" evidence="2">
    <location>
        <begin position="147"/>
        <end position="388"/>
    </location>
</feature>
<feature type="domain" description="TRAM" evidence="1">
    <location>
        <begin position="391"/>
        <end position="463"/>
    </location>
</feature>
<feature type="binding site" evidence="1">
    <location>
        <position position="20"/>
    </location>
    <ligand>
        <name>[4Fe-4S] cluster</name>
        <dbReference type="ChEBI" id="CHEBI:49883"/>
        <label>1</label>
    </ligand>
</feature>
<feature type="binding site" evidence="1">
    <location>
        <position position="56"/>
    </location>
    <ligand>
        <name>[4Fe-4S] cluster</name>
        <dbReference type="ChEBI" id="CHEBI:49883"/>
        <label>1</label>
    </ligand>
</feature>
<feature type="binding site" evidence="1">
    <location>
        <position position="85"/>
    </location>
    <ligand>
        <name>[4Fe-4S] cluster</name>
        <dbReference type="ChEBI" id="CHEBI:49883"/>
        <label>1</label>
    </ligand>
</feature>
<feature type="binding site" evidence="1">
    <location>
        <position position="161"/>
    </location>
    <ligand>
        <name>[4Fe-4S] cluster</name>
        <dbReference type="ChEBI" id="CHEBI:49883"/>
        <label>2</label>
        <note>4Fe-4S-S-AdoMet</note>
    </ligand>
</feature>
<feature type="binding site" evidence="1">
    <location>
        <position position="165"/>
    </location>
    <ligand>
        <name>[4Fe-4S] cluster</name>
        <dbReference type="ChEBI" id="CHEBI:49883"/>
        <label>2</label>
        <note>4Fe-4S-S-AdoMet</note>
    </ligand>
</feature>
<feature type="binding site" evidence="1">
    <location>
        <position position="168"/>
    </location>
    <ligand>
        <name>[4Fe-4S] cluster</name>
        <dbReference type="ChEBI" id="CHEBI:49883"/>
        <label>2</label>
        <note>4Fe-4S-S-AdoMet</note>
    </ligand>
</feature>
<proteinExistence type="inferred from homology"/>
<name>RIMO_ACISJ</name>
<organism>
    <name type="scientific">Acidovorax sp. (strain JS42)</name>
    <dbReference type="NCBI Taxonomy" id="232721"/>
    <lineage>
        <taxon>Bacteria</taxon>
        <taxon>Pseudomonadati</taxon>
        <taxon>Pseudomonadota</taxon>
        <taxon>Betaproteobacteria</taxon>
        <taxon>Burkholderiales</taxon>
        <taxon>Comamonadaceae</taxon>
        <taxon>Acidovorax</taxon>
    </lineage>
</organism>
<comment type="function">
    <text evidence="1">Catalyzes the methylthiolation of an aspartic acid residue of ribosomal protein uS12.</text>
</comment>
<comment type="catalytic activity">
    <reaction evidence="1">
        <text>L-aspartate(89)-[ribosomal protein uS12]-hydrogen + (sulfur carrier)-SH + AH2 + 2 S-adenosyl-L-methionine = 3-methylsulfanyl-L-aspartate(89)-[ribosomal protein uS12]-hydrogen + (sulfur carrier)-H + 5'-deoxyadenosine + L-methionine + A + S-adenosyl-L-homocysteine + 2 H(+)</text>
        <dbReference type="Rhea" id="RHEA:37087"/>
        <dbReference type="Rhea" id="RHEA-COMP:10460"/>
        <dbReference type="Rhea" id="RHEA-COMP:10461"/>
        <dbReference type="Rhea" id="RHEA-COMP:14737"/>
        <dbReference type="Rhea" id="RHEA-COMP:14739"/>
        <dbReference type="ChEBI" id="CHEBI:13193"/>
        <dbReference type="ChEBI" id="CHEBI:15378"/>
        <dbReference type="ChEBI" id="CHEBI:17319"/>
        <dbReference type="ChEBI" id="CHEBI:17499"/>
        <dbReference type="ChEBI" id="CHEBI:29917"/>
        <dbReference type="ChEBI" id="CHEBI:29961"/>
        <dbReference type="ChEBI" id="CHEBI:57844"/>
        <dbReference type="ChEBI" id="CHEBI:57856"/>
        <dbReference type="ChEBI" id="CHEBI:59789"/>
        <dbReference type="ChEBI" id="CHEBI:64428"/>
        <dbReference type="ChEBI" id="CHEBI:73599"/>
        <dbReference type="EC" id="2.8.4.4"/>
    </reaction>
</comment>
<comment type="cofactor">
    <cofactor evidence="1">
        <name>[4Fe-4S] cluster</name>
        <dbReference type="ChEBI" id="CHEBI:49883"/>
    </cofactor>
    <text evidence="1">Binds 2 [4Fe-4S] clusters. One cluster is coordinated with 3 cysteines and an exchangeable S-adenosyl-L-methionine.</text>
</comment>
<comment type="subcellular location">
    <subcellularLocation>
        <location evidence="1">Cytoplasm</location>
    </subcellularLocation>
</comment>
<comment type="similarity">
    <text evidence="1">Belongs to the methylthiotransferase family. RimO subfamily.</text>
</comment>